<dbReference type="EC" id="2.6.1.9" evidence="1"/>
<dbReference type="EMBL" id="AE017125">
    <property type="protein sequence ID" value="AAP77209.1"/>
    <property type="molecule type" value="Genomic_DNA"/>
</dbReference>
<dbReference type="RefSeq" id="WP_011115454.1">
    <property type="nucleotide sequence ID" value="NC_004917.1"/>
</dbReference>
<dbReference type="SMR" id="Q7VIJ3"/>
<dbReference type="STRING" id="235279.HH_0612"/>
<dbReference type="KEGG" id="hhe:HH_0612"/>
<dbReference type="eggNOG" id="COG0079">
    <property type="taxonomic scope" value="Bacteria"/>
</dbReference>
<dbReference type="HOGENOM" id="CLU_017584_3_3_7"/>
<dbReference type="OrthoDB" id="9813612at2"/>
<dbReference type="UniPathway" id="UPA00031">
    <property type="reaction ID" value="UER00012"/>
</dbReference>
<dbReference type="Proteomes" id="UP000002495">
    <property type="component" value="Chromosome"/>
</dbReference>
<dbReference type="GO" id="GO:0004400">
    <property type="term" value="F:histidinol-phosphate transaminase activity"/>
    <property type="evidence" value="ECO:0007669"/>
    <property type="project" value="UniProtKB-UniRule"/>
</dbReference>
<dbReference type="GO" id="GO:0030170">
    <property type="term" value="F:pyridoxal phosphate binding"/>
    <property type="evidence" value="ECO:0007669"/>
    <property type="project" value="InterPro"/>
</dbReference>
<dbReference type="GO" id="GO:0000105">
    <property type="term" value="P:L-histidine biosynthetic process"/>
    <property type="evidence" value="ECO:0007669"/>
    <property type="project" value="UniProtKB-UniRule"/>
</dbReference>
<dbReference type="CDD" id="cd00609">
    <property type="entry name" value="AAT_like"/>
    <property type="match status" value="1"/>
</dbReference>
<dbReference type="Gene3D" id="3.90.1150.10">
    <property type="entry name" value="Aspartate Aminotransferase, domain 1"/>
    <property type="match status" value="1"/>
</dbReference>
<dbReference type="Gene3D" id="3.40.640.10">
    <property type="entry name" value="Type I PLP-dependent aspartate aminotransferase-like (Major domain)"/>
    <property type="match status" value="1"/>
</dbReference>
<dbReference type="HAMAP" id="MF_01023">
    <property type="entry name" value="HisC_aminotrans_2"/>
    <property type="match status" value="1"/>
</dbReference>
<dbReference type="InterPro" id="IPR004839">
    <property type="entry name" value="Aminotransferase_I/II_large"/>
</dbReference>
<dbReference type="InterPro" id="IPR005861">
    <property type="entry name" value="HisP_aminotrans"/>
</dbReference>
<dbReference type="InterPro" id="IPR050106">
    <property type="entry name" value="HistidinolP_aminotransfase"/>
</dbReference>
<dbReference type="InterPro" id="IPR015424">
    <property type="entry name" value="PyrdxlP-dep_Trfase"/>
</dbReference>
<dbReference type="InterPro" id="IPR015421">
    <property type="entry name" value="PyrdxlP-dep_Trfase_major"/>
</dbReference>
<dbReference type="InterPro" id="IPR015422">
    <property type="entry name" value="PyrdxlP-dep_Trfase_small"/>
</dbReference>
<dbReference type="NCBIfam" id="TIGR01141">
    <property type="entry name" value="hisC"/>
    <property type="match status" value="1"/>
</dbReference>
<dbReference type="PANTHER" id="PTHR43643:SF3">
    <property type="entry name" value="HISTIDINOL-PHOSPHATE AMINOTRANSFERASE"/>
    <property type="match status" value="1"/>
</dbReference>
<dbReference type="PANTHER" id="PTHR43643">
    <property type="entry name" value="HISTIDINOL-PHOSPHATE AMINOTRANSFERASE 2"/>
    <property type="match status" value="1"/>
</dbReference>
<dbReference type="Pfam" id="PF00155">
    <property type="entry name" value="Aminotran_1_2"/>
    <property type="match status" value="1"/>
</dbReference>
<dbReference type="SUPFAM" id="SSF53383">
    <property type="entry name" value="PLP-dependent transferases"/>
    <property type="match status" value="1"/>
</dbReference>
<keyword id="KW-0028">Amino-acid biosynthesis</keyword>
<keyword id="KW-0032">Aminotransferase</keyword>
<keyword id="KW-0368">Histidine biosynthesis</keyword>
<keyword id="KW-0663">Pyridoxal phosphate</keyword>
<keyword id="KW-1185">Reference proteome</keyword>
<keyword id="KW-0808">Transferase</keyword>
<evidence type="ECO:0000255" key="1">
    <source>
        <dbReference type="HAMAP-Rule" id="MF_01023"/>
    </source>
</evidence>
<reference key="1">
    <citation type="journal article" date="2003" name="Proc. Natl. Acad. Sci. U.S.A.">
        <title>The complete genome sequence of the carcinogenic bacterium Helicobacter hepaticus.</title>
        <authorList>
            <person name="Suerbaum S."/>
            <person name="Josenhans C."/>
            <person name="Sterzenbach T."/>
            <person name="Drescher B."/>
            <person name="Brandt P."/>
            <person name="Bell M."/>
            <person name="Droege M."/>
            <person name="Fartmann B."/>
            <person name="Fischer H.-P."/>
            <person name="Ge Z."/>
            <person name="Hoerster A."/>
            <person name="Holland R."/>
            <person name="Klein K."/>
            <person name="Koenig J."/>
            <person name="Macko L."/>
            <person name="Mendz G.L."/>
            <person name="Nyakatura G."/>
            <person name="Schauer D.B."/>
            <person name="Shen Z."/>
            <person name="Weber J."/>
            <person name="Frosch M."/>
            <person name="Fox J.G."/>
        </authorList>
    </citation>
    <scope>NUCLEOTIDE SEQUENCE [LARGE SCALE GENOMIC DNA]</scope>
    <source>
        <strain>ATCC 51449 / 3B1</strain>
    </source>
</reference>
<feature type="chain" id="PRO_0000153372" description="Histidinol-phosphate aminotransferase">
    <location>
        <begin position="1"/>
        <end position="370"/>
    </location>
</feature>
<feature type="modified residue" description="N6-(pyridoxal phosphate)lysine" evidence="1">
    <location>
        <position position="229"/>
    </location>
</feature>
<organism>
    <name type="scientific">Helicobacter hepaticus (strain ATCC 51449 / 3B1)</name>
    <dbReference type="NCBI Taxonomy" id="235279"/>
    <lineage>
        <taxon>Bacteria</taxon>
        <taxon>Pseudomonadati</taxon>
        <taxon>Campylobacterota</taxon>
        <taxon>Epsilonproteobacteria</taxon>
        <taxon>Campylobacterales</taxon>
        <taxon>Helicobacteraceae</taxon>
        <taxon>Helicobacter</taxon>
    </lineage>
</organism>
<comment type="catalytic activity">
    <reaction evidence="1">
        <text>L-histidinol phosphate + 2-oxoglutarate = 3-(imidazol-4-yl)-2-oxopropyl phosphate + L-glutamate</text>
        <dbReference type="Rhea" id="RHEA:23744"/>
        <dbReference type="ChEBI" id="CHEBI:16810"/>
        <dbReference type="ChEBI" id="CHEBI:29985"/>
        <dbReference type="ChEBI" id="CHEBI:57766"/>
        <dbReference type="ChEBI" id="CHEBI:57980"/>
        <dbReference type="EC" id="2.6.1.9"/>
    </reaction>
</comment>
<comment type="cofactor">
    <cofactor evidence="1">
        <name>pyridoxal 5'-phosphate</name>
        <dbReference type="ChEBI" id="CHEBI:597326"/>
    </cofactor>
</comment>
<comment type="pathway">
    <text evidence="1">Amino-acid biosynthesis; L-histidine biosynthesis; L-histidine from 5-phospho-alpha-D-ribose 1-diphosphate: step 7/9.</text>
</comment>
<comment type="subunit">
    <text evidence="1">Homodimer.</text>
</comment>
<comment type="similarity">
    <text evidence="1">Belongs to the class-II pyridoxal-phosphate-dependent aminotransferase family. Histidinol-phosphate aminotransferase subfamily.</text>
</comment>
<gene>
    <name evidence="1" type="primary">hisC</name>
    <name type="ordered locus">HH_0612</name>
</gene>
<accession>Q7VIJ3</accession>
<proteinExistence type="inferred from homology"/>
<protein>
    <recommendedName>
        <fullName evidence="1">Histidinol-phosphate aminotransferase</fullName>
        <ecNumber evidence="1">2.6.1.9</ecNumber>
    </recommendedName>
    <alternativeName>
        <fullName evidence="1">Imidazole acetol-phosphate transaminase</fullName>
    </alternativeName>
</protein>
<name>HIS8_HELHP</name>
<sequence length="370" mass="41703">MFRSALKQIVTYEAGKPIELVVREYGIKPEDIIKLGSNENPYGTSAQVVESLQKNAHKAFLYPDDSMYELKNALASHFDVESKHIIIGAGSDQIIEFCMQALNHHNAQVLMAKTTFAMYEVYAKLAGVEISKTPSDEHILEEFFQLYQSEKERKHISAVFLCAPNNPLGECLDAAAIEQFIQAVDKDTLVIVDGAYQEFAAYKDKAKAINPKQLIERFSNVIYLGTFSKVYGLGGMRVGYGIASEHIISMLYKVRPPFNVTTLSLQAALIALKDQVFVSECIKNNAIEMARYEAFANEMGFTFIPSYGNFITFLHSHIESSHLCDWLLQNGLIVRNLRSYGLNAFRITIGRAEQNTRVFELIKAYLQIHN</sequence>